<sequence length="276" mass="31324">MIRVIALSNPRLAQAFVDYMRTQQVHLDMRPQGHEAELWLEDETQLSKVQEALEIFLRDPTNPRYLAASWQTGSMDTGIQYQRYSYLQTLKQKAGPLTLSVMVVTIAVFILMQISGYESVMTWLAFPAEGQQLQLWRWFSHALLHFSLLHILFNLMWWWYLGGPVEKVLGTGKLLVIALVSALVSGWAQSWCSGTYFGGLSGVVYALMGYVWLRGEREPDGYLSMPRSLMAFALLWLVAGYFDILGMSIANAAHVAGLIVGLLMAFWDTYNKTNPR</sequence>
<comment type="function">
    <text evidence="1">Rhomboid-type serine protease that catalyzes intramembrane proteolysis.</text>
</comment>
<comment type="catalytic activity">
    <reaction evidence="1">
        <text>Cleaves type-1 transmembrane domains using a catalytic dyad composed of serine and histidine that are contributed by different transmembrane domains.</text>
        <dbReference type="EC" id="3.4.21.105"/>
    </reaction>
</comment>
<comment type="subcellular location">
    <subcellularLocation>
        <location evidence="1">Cell inner membrane</location>
        <topology evidence="1">Multi-pass membrane protein</topology>
    </subcellularLocation>
</comment>
<comment type="similarity">
    <text evidence="1">Belongs to the peptidase S54 family.</text>
</comment>
<comment type="sequence caution" evidence="2">
    <conflict type="erroneous initiation">
        <sequence resource="EMBL-CDS" id="CAG77035"/>
    </conflict>
</comment>
<gene>
    <name evidence="1" type="primary">glpG</name>
    <name type="ordered locus">ECA4138</name>
</gene>
<evidence type="ECO:0000255" key="1">
    <source>
        <dbReference type="HAMAP-Rule" id="MF_01594"/>
    </source>
</evidence>
<evidence type="ECO:0000305" key="2"/>
<reference key="1">
    <citation type="journal article" date="2004" name="Proc. Natl. Acad. Sci. U.S.A.">
        <title>Genome sequence of the enterobacterial phytopathogen Erwinia carotovora subsp. atroseptica and characterization of virulence factors.</title>
        <authorList>
            <person name="Bell K.S."/>
            <person name="Sebaihia M."/>
            <person name="Pritchard L."/>
            <person name="Holden M.T.G."/>
            <person name="Hyman L.J."/>
            <person name="Holeva M.C."/>
            <person name="Thomson N.R."/>
            <person name="Bentley S.D."/>
            <person name="Churcher L.J.C."/>
            <person name="Mungall K."/>
            <person name="Atkin R."/>
            <person name="Bason N."/>
            <person name="Brooks K."/>
            <person name="Chillingworth T."/>
            <person name="Clark K."/>
            <person name="Doggett J."/>
            <person name="Fraser A."/>
            <person name="Hance Z."/>
            <person name="Hauser H."/>
            <person name="Jagels K."/>
            <person name="Moule S."/>
            <person name="Norbertczak H."/>
            <person name="Ormond D."/>
            <person name="Price C."/>
            <person name="Quail M.A."/>
            <person name="Sanders M."/>
            <person name="Walker D."/>
            <person name="Whitehead S."/>
            <person name="Salmond G.P.C."/>
            <person name="Birch P.R.J."/>
            <person name="Parkhill J."/>
            <person name="Toth I.K."/>
        </authorList>
    </citation>
    <scope>NUCLEOTIDE SEQUENCE [LARGE SCALE GENOMIC DNA]</scope>
    <source>
        <strain>SCRI 1043 / ATCC BAA-672</strain>
    </source>
</reference>
<proteinExistence type="inferred from homology"/>
<accession>Q6CZL3</accession>
<feature type="chain" id="PRO_0000321678" description="Rhomboid protease GlpG">
    <location>
        <begin position="1"/>
        <end position="276"/>
    </location>
</feature>
<feature type="transmembrane region" description="Helical" evidence="1">
    <location>
        <begin position="94"/>
        <end position="114"/>
    </location>
</feature>
<feature type="transmembrane region" description="Helical" evidence="1">
    <location>
        <begin position="142"/>
        <end position="162"/>
    </location>
</feature>
<feature type="transmembrane region" description="Helical" evidence="1">
    <location>
        <begin position="168"/>
        <end position="188"/>
    </location>
</feature>
<feature type="transmembrane region" description="Helical" evidence="1">
    <location>
        <begin position="193"/>
        <end position="213"/>
    </location>
</feature>
<feature type="transmembrane region" description="Helical" evidence="1">
    <location>
        <begin position="229"/>
        <end position="249"/>
    </location>
</feature>
<feature type="transmembrane region" description="Helical" evidence="1">
    <location>
        <begin position="250"/>
        <end position="270"/>
    </location>
</feature>
<feature type="active site" description="Nucleophile" evidence="1">
    <location>
        <position position="201"/>
    </location>
</feature>
<feature type="active site" evidence="1">
    <location>
        <position position="254"/>
    </location>
</feature>
<protein>
    <recommendedName>
        <fullName evidence="1">Rhomboid protease GlpG</fullName>
        <ecNumber evidence="1">3.4.21.105</ecNumber>
    </recommendedName>
    <alternativeName>
        <fullName evidence="1">Intramembrane serine protease</fullName>
    </alternativeName>
</protein>
<organism>
    <name type="scientific">Pectobacterium atrosepticum (strain SCRI 1043 / ATCC BAA-672)</name>
    <name type="common">Erwinia carotovora subsp. atroseptica</name>
    <dbReference type="NCBI Taxonomy" id="218491"/>
    <lineage>
        <taxon>Bacteria</taxon>
        <taxon>Pseudomonadati</taxon>
        <taxon>Pseudomonadota</taxon>
        <taxon>Gammaproteobacteria</taxon>
        <taxon>Enterobacterales</taxon>
        <taxon>Pectobacteriaceae</taxon>
        <taxon>Pectobacterium</taxon>
    </lineage>
</organism>
<name>GLPG_PECAS</name>
<dbReference type="EC" id="3.4.21.105" evidence="1"/>
<dbReference type="EMBL" id="BX950851">
    <property type="protein sequence ID" value="CAG77035.1"/>
    <property type="status" value="ALT_INIT"/>
    <property type="molecule type" value="Genomic_DNA"/>
</dbReference>
<dbReference type="RefSeq" id="WP_011095609.1">
    <property type="nucleotide sequence ID" value="NC_004547.2"/>
</dbReference>
<dbReference type="SMR" id="Q6CZL3"/>
<dbReference type="STRING" id="218491.ECA4138"/>
<dbReference type="MEROPS" id="S54.016"/>
<dbReference type="KEGG" id="eca:ECA4138"/>
<dbReference type="eggNOG" id="COG0705">
    <property type="taxonomic scope" value="Bacteria"/>
</dbReference>
<dbReference type="HOGENOM" id="CLU_058989_0_0_6"/>
<dbReference type="OrthoDB" id="9778341at2"/>
<dbReference type="Proteomes" id="UP000007966">
    <property type="component" value="Chromosome"/>
</dbReference>
<dbReference type="GO" id="GO:0005886">
    <property type="term" value="C:plasma membrane"/>
    <property type="evidence" value="ECO:0007669"/>
    <property type="project" value="UniProtKB-SubCell"/>
</dbReference>
<dbReference type="GO" id="GO:0004252">
    <property type="term" value="F:serine-type endopeptidase activity"/>
    <property type="evidence" value="ECO:0007669"/>
    <property type="project" value="UniProtKB-UniRule"/>
</dbReference>
<dbReference type="GO" id="GO:0006508">
    <property type="term" value="P:proteolysis"/>
    <property type="evidence" value="ECO:0007669"/>
    <property type="project" value="UniProtKB-UniRule"/>
</dbReference>
<dbReference type="Gene3D" id="3.30.70.2350">
    <property type="match status" value="1"/>
</dbReference>
<dbReference type="Gene3D" id="1.20.1540.10">
    <property type="entry name" value="Rhomboid-like"/>
    <property type="match status" value="1"/>
</dbReference>
<dbReference type="HAMAP" id="MF_01594">
    <property type="entry name" value="Rhomboid_GlpG"/>
    <property type="match status" value="1"/>
</dbReference>
<dbReference type="InterPro" id="IPR038236">
    <property type="entry name" value="GlpG_N_sf"/>
</dbReference>
<dbReference type="InterPro" id="IPR022732">
    <property type="entry name" value="Peptidase_S54_GlpG_N"/>
</dbReference>
<dbReference type="InterPro" id="IPR022764">
    <property type="entry name" value="Peptidase_S54_rhomboid_dom"/>
</dbReference>
<dbReference type="InterPro" id="IPR035952">
    <property type="entry name" value="Rhomboid-like_sf"/>
</dbReference>
<dbReference type="InterPro" id="IPR023662">
    <property type="entry name" value="Rhomboid_protease_GlpG"/>
</dbReference>
<dbReference type="NCBIfam" id="NF008155">
    <property type="entry name" value="PRK10907.1"/>
    <property type="match status" value="1"/>
</dbReference>
<dbReference type="NCBIfam" id="TIGR04239">
    <property type="entry name" value="rhombo_GlpG"/>
    <property type="match status" value="1"/>
</dbReference>
<dbReference type="PANTHER" id="PTHR43066:SF26">
    <property type="entry name" value="RHOMBOID PROTEASE GLPG"/>
    <property type="match status" value="1"/>
</dbReference>
<dbReference type="PANTHER" id="PTHR43066">
    <property type="entry name" value="RHOMBOID-RELATED PROTEIN"/>
    <property type="match status" value="1"/>
</dbReference>
<dbReference type="Pfam" id="PF01694">
    <property type="entry name" value="Rhomboid"/>
    <property type="match status" value="1"/>
</dbReference>
<dbReference type="Pfam" id="PF12122">
    <property type="entry name" value="Rhomboid_N"/>
    <property type="match status" value="1"/>
</dbReference>
<dbReference type="SUPFAM" id="SSF144091">
    <property type="entry name" value="Rhomboid-like"/>
    <property type="match status" value="1"/>
</dbReference>
<keyword id="KW-0997">Cell inner membrane</keyword>
<keyword id="KW-1003">Cell membrane</keyword>
<keyword id="KW-0378">Hydrolase</keyword>
<keyword id="KW-0472">Membrane</keyword>
<keyword id="KW-0645">Protease</keyword>
<keyword id="KW-1185">Reference proteome</keyword>
<keyword id="KW-0720">Serine protease</keyword>
<keyword id="KW-0812">Transmembrane</keyword>
<keyword id="KW-1133">Transmembrane helix</keyword>